<keyword id="KW-0238">DNA-binding</keyword>
<keyword id="KW-0479">Metal-binding</keyword>
<keyword id="KW-0539">Nucleus</keyword>
<keyword id="KW-1185">Reference proteome</keyword>
<keyword id="KW-0677">Repeat</keyword>
<keyword id="KW-0862">Zinc</keyword>
<keyword id="KW-0863">Zinc-finger</keyword>
<protein>
    <recommendedName>
        <fullName>Zinc finger CCCH domain-containing protein 58</fullName>
        <shortName>AtC3H58</shortName>
    </recommendedName>
    <alternativeName>
        <fullName>Zinc finger CCCH domain-containing protein ZFN-like 3</fullName>
    </alternativeName>
</protein>
<name>C3H58_ARATH</name>
<dbReference type="EMBL" id="AC069328">
    <property type="status" value="NOT_ANNOTATED_CDS"/>
    <property type="molecule type" value="Genomic_DNA"/>
</dbReference>
<dbReference type="EMBL" id="CP002688">
    <property type="protein sequence ID" value="AED92578.1"/>
    <property type="molecule type" value="Genomic_DNA"/>
</dbReference>
<dbReference type="EMBL" id="BT010886">
    <property type="protein sequence ID" value="AAR24664.1"/>
    <property type="molecule type" value="mRNA"/>
</dbReference>
<dbReference type="EMBL" id="AK230175">
    <property type="protein sequence ID" value="BAF01984.1"/>
    <property type="molecule type" value="mRNA"/>
</dbReference>
<dbReference type="RefSeq" id="NP_197356.2">
    <property type="nucleotide sequence ID" value="NM_121860.5"/>
</dbReference>
<dbReference type="BioGRID" id="17249">
    <property type="interactions" value="1"/>
</dbReference>
<dbReference type="FunCoup" id="Q6NPN3">
    <property type="interactions" value="145"/>
</dbReference>
<dbReference type="IntAct" id="Q6NPN3">
    <property type="interactions" value="1"/>
</dbReference>
<dbReference type="STRING" id="3702.Q6NPN3"/>
<dbReference type="PaxDb" id="3702-AT5G18550.1"/>
<dbReference type="ProteomicsDB" id="240486"/>
<dbReference type="EnsemblPlants" id="AT5G18550.1">
    <property type="protein sequence ID" value="AT5G18550.1"/>
    <property type="gene ID" value="AT5G18550"/>
</dbReference>
<dbReference type="GeneID" id="831973"/>
<dbReference type="Gramene" id="AT5G18550.1">
    <property type="protein sequence ID" value="AT5G18550.1"/>
    <property type="gene ID" value="AT5G18550"/>
</dbReference>
<dbReference type="KEGG" id="ath:AT5G18550"/>
<dbReference type="Araport" id="AT5G18550"/>
<dbReference type="TAIR" id="AT5G18550"/>
<dbReference type="eggNOG" id="KOG1677">
    <property type="taxonomic scope" value="Eukaryota"/>
</dbReference>
<dbReference type="HOGENOM" id="CLU_033292_1_0_1"/>
<dbReference type="InParanoid" id="Q6NPN3"/>
<dbReference type="OrthoDB" id="411372at2759"/>
<dbReference type="PhylomeDB" id="Q6NPN3"/>
<dbReference type="PRO" id="PR:Q6NPN3"/>
<dbReference type="Proteomes" id="UP000006548">
    <property type="component" value="Chromosome 5"/>
</dbReference>
<dbReference type="ExpressionAtlas" id="Q6NPN3">
    <property type="expression patterns" value="baseline and differential"/>
</dbReference>
<dbReference type="GO" id="GO:0005634">
    <property type="term" value="C:nucleus"/>
    <property type="evidence" value="ECO:0007669"/>
    <property type="project" value="UniProtKB-SubCell"/>
</dbReference>
<dbReference type="GO" id="GO:0003677">
    <property type="term" value="F:DNA binding"/>
    <property type="evidence" value="ECO:0007669"/>
    <property type="project" value="UniProtKB-KW"/>
</dbReference>
<dbReference type="GO" id="GO:0003729">
    <property type="term" value="F:mRNA binding"/>
    <property type="evidence" value="ECO:0000314"/>
    <property type="project" value="TAIR"/>
</dbReference>
<dbReference type="GO" id="GO:0008270">
    <property type="term" value="F:zinc ion binding"/>
    <property type="evidence" value="ECO:0007669"/>
    <property type="project" value="UniProtKB-KW"/>
</dbReference>
<dbReference type="FunFam" id="4.10.1000.10:FF:000030">
    <property type="entry name" value="CCCH type zinc finger protein"/>
    <property type="match status" value="1"/>
</dbReference>
<dbReference type="FunFam" id="2.30.30.1190:FF:000006">
    <property type="entry name" value="Zinc finger CCCH domain-containing protein 58"/>
    <property type="match status" value="1"/>
</dbReference>
<dbReference type="FunFam" id="4.10.1000.10:FF:000028">
    <property type="entry name" value="Zinc finger nuclease 2"/>
    <property type="match status" value="1"/>
</dbReference>
<dbReference type="Gene3D" id="2.30.30.1190">
    <property type="match status" value="1"/>
</dbReference>
<dbReference type="Gene3D" id="4.10.1000.10">
    <property type="entry name" value="Zinc finger, CCCH-type"/>
    <property type="match status" value="2"/>
</dbReference>
<dbReference type="InterPro" id="IPR050974">
    <property type="entry name" value="Plant_ZF_CCCH"/>
</dbReference>
<dbReference type="InterPro" id="IPR000571">
    <property type="entry name" value="Znf_CCCH"/>
</dbReference>
<dbReference type="InterPro" id="IPR036855">
    <property type="entry name" value="Znf_CCCH_sf"/>
</dbReference>
<dbReference type="PANTHER" id="PTHR12506">
    <property type="entry name" value="PROTEIN PHOSPHATASE RELATED"/>
    <property type="match status" value="1"/>
</dbReference>
<dbReference type="PANTHER" id="PTHR12506:SF41">
    <property type="entry name" value="ZINC FINGER CCCH DOMAIN-CONTAINING PROTEIN 58"/>
    <property type="match status" value="1"/>
</dbReference>
<dbReference type="Pfam" id="PF00642">
    <property type="entry name" value="zf-CCCH"/>
    <property type="match status" value="5"/>
</dbReference>
<dbReference type="SMART" id="SM00356">
    <property type="entry name" value="ZnF_C3H1"/>
    <property type="match status" value="5"/>
</dbReference>
<dbReference type="SUPFAM" id="SSF90229">
    <property type="entry name" value="CCCH zinc finger"/>
    <property type="match status" value="5"/>
</dbReference>
<dbReference type="PROSITE" id="PS50103">
    <property type="entry name" value="ZF_C3H1"/>
    <property type="match status" value="5"/>
</dbReference>
<reference key="1">
    <citation type="journal article" date="2000" name="Nature">
        <title>Sequence and analysis of chromosome 5 of the plant Arabidopsis thaliana.</title>
        <authorList>
            <person name="Tabata S."/>
            <person name="Kaneko T."/>
            <person name="Nakamura Y."/>
            <person name="Kotani H."/>
            <person name="Kato T."/>
            <person name="Asamizu E."/>
            <person name="Miyajima N."/>
            <person name="Sasamoto S."/>
            <person name="Kimura T."/>
            <person name="Hosouchi T."/>
            <person name="Kawashima K."/>
            <person name="Kohara M."/>
            <person name="Matsumoto M."/>
            <person name="Matsuno A."/>
            <person name="Muraki A."/>
            <person name="Nakayama S."/>
            <person name="Nakazaki N."/>
            <person name="Naruo K."/>
            <person name="Okumura S."/>
            <person name="Shinpo S."/>
            <person name="Takeuchi C."/>
            <person name="Wada T."/>
            <person name="Watanabe A."/>
            <person name="Yamada M."/>
            <person name="Yasuda M."/>
            <person name="Sato S."/>
            <person name="de la Bastide M."/>
            <person name="Huang E."/>
            <person name="Spiegel L."/>
            <person name="Gnoj L."/>
            <person name="O'Shaughnessy A."/>
            <person name="Preston R."/>
            <person name="Habermann K."/>
            <person name="Murray J."/>
            <person name="Johnson D."/>
            <person name="Rohlfing T."/>
            <person name="Nelson J."/>
            <person name="Stoneking T."/>
            <person name="Pepin K."/>
            <person name="Spieth J."/>
            <person name="Sekhon M."/>
            <person name="Armstrong J."/>
            <person name="Becker M."/>
            <person name="Belter E."/>
            <person name="Cordum H."/>
            <person name="Cordes M."/>
            <person name="Courtney L."/>
            <person name="Courtney W."/>
            <person name="Dante M."/>
            <person name="Du H."/>
            <person name="Edwards J."/>
            <person name="Fryman J."/>
            <person name="Haakensen B."/>
            <person name="Lamar E."/>
            <person name="Latreille P."/>
            <person name="Leonard S."/>
            <person name="Meyer R."/>
            <person name="Mulvaney E."/>
            <person name="Ozersky P."/>
            <person name="Riley A."/>
            <person name="Strowmatt C."/>
            <person name="Wagner-McPherson C."/>
            <person name="Wollam A."/>
            <person name="Yoakum M."/>
            <person name="Bell M."/>
            <person name="Dedhia N."/>
            <person name="Parnell L."/>
            <person name="Shah R."/>
            <person name="Rodriguez M."/>
            <person name="Hoon See L."/>
            <person name="Vil D."/>
            <person name="Baker J."/>
            <person name="Kirchoff K."/>
            <person name="Toth K."/>
            <person name="King L."/>
            <person name="Bahret A."/>
            <person name="Miller B."/>
            <person name="Marra M.A."/>
            <person name="Martienssen R."/>
            <person name="McCombie W.R."/>
            <person name="Wilson R.K."/>
            <person name="Murphy G."/>
            <person name="Bancroft I."/>
            <person name="Volckaert G."/>
            <person name="Wambutt R."/>
            <person name="Duesterhoeft A."/>
            <person name="Stiekema W."/>
            <person name="Pohl T."/>
            <person name="Entian K.-D."/>
            <person name="Terryn N."/>
            <person name="Hartley N."/>
            <person name="Bent E."/>
            <person name="Johnson S."/>
            <person name="Langham S.-A."/>
            <person name="McCullagh B."/>
            <person name="Robben J."/>
            <person name="Grymonprez B."/>
            <person name="Zimmermann W."/>
            <person name="Ramsperger U."/>
            <person name="Wedler H."/>
            <person name="Balke K."/>
            <person name="Wedler E."/>
            <person name="Peters S."/>
            <person name="van Staveren M."/>
            <person name="Dirkse W."/>
            <person name="Mooijman P."/>
            <person name="Klein Lankhorst R."/>
            <person name="Weitzenegger T."/>
            <person name="Bothe G."/>
            <person name="Rose M."/>
            <person name="Hauf J."/>
            <person name="Berneiser S."/>
            <person name="Hempel S."/>
            <person name="Feldpausch M."/>
            <person name="Lamberth S."/>
            <person name="Villarroel R."/>
            <person name="Gielen J."/>
            <person name="Ardiles W."/>
            <person name="Bents O."/>
            <person name="Lemcke K."/>
            <person name="Kolesov G."/>
            <person name="Mayer K.F.X."/>
            <person name="Rudd S."/>
            <person name="Schoof H."/>
            <person name="Schueller C."/>
            <person name="Zaccaria P."/>
            <person name="Mewes H.-W."/>
            <person name="Bevan M."/>
            <person name="Fransz P.F."/>
        </authorList>
    </citation>
    <scope>NUCLEOTIDE SEQUENCE [LARGE SCALE GENOMIC DNA]</scope>
    <source>
        <strain>cv. Columbia</strain>
    </source>
</reference>
<reference key="2">
    <citation type="journal article" date="2017" name="Plant J.">
        <title>Araport11: a complete reannotation of the Arabidopsis thaliana reference genome.</title>
        <authorList>
            <person name="Cheng C.Y."/>
            <person name="Krishnakumar V."/>
            <person name="Chan A.P."/>
            <person name="Thibaud-Nissen F."/>
            <person name="Schobel S."/>
            <person name="Town C.D."/>
        </authorList>
    </citation>
    <scope>GENOME REANNOTATION</scope>
    <source>
        <strain>cv. Columbia</strain>
    </source>
</reference>
<reference key="3">
    <citation type="submission" date="2003-12" db="EMBL/GenBank/DDBJ databases">
        <authorList>
            <person name="Kim C.J."/>
            <person name="Chen H."/>
            <person name="Cheuk R.F."/>
            <person name="Shinn P."/>
            <person name="Carninci P."/>
            <person name="Hayashizaki Y."/>
            <person name="Ishida J."/>
            <person name="Kamiya A."/>
            <person name="Kawai J."/>
            <person name="Narusaka M."/>
            <person name="Sakurai T."/>
            <person name="Satou M."/>
            <person name="Seki M."/>
            <person name="Shinozaki K."/>
            <person name="Ecker J.R."/>
        </authorList>
    </citation>
    <scope>NUCLEOTIDE SEQUENCE [LARGE SCALE MRNA]</scope>
    <source>
        <strain>cv. Columbia</strain>
    </source>
</reference>
<reference key="4">
    <citation type="submission" date="2006-07" db="EMBL/GenBank/DDBJ databases">
        <title>Large-scale analysis of RIKEN Arabidopsis full-length (RAFL) cDNAs.</title>
        <authorList>
            <person name="Totoki Y."/>
            <person name="Seki M."/>
            <person name="Ishida J."/>
            <person name="Nakajima M."/>
            <person name="Enju A."/>
            <person name="Kamiya A."/>
            <person name="Narusaka M."/>
            <person name="Shin-i T."/>
            <person name="Nakagawa M."/>
            <person name="Sakamoto N."/>
            <person name="Oishi K."/>
            <person name="Kohara Y."/>
            <person name="Kobayashi M."/>
            <person name="Toyoda A."/>
            <person name="Sakaki Y."/>
            <person name="Sakurai T."/>
            <person name="Iida K."/>
            <person name="Akiyama K."/>
            <person name="Satou M."/>
            <person name="Toyoda T."/>
            <person name="Konagaya A."/>
            <person name="Carninci P."/>
            <person name="Kawai J."/>
            <person name="Hayashizaki Y."/>
            <person name="Shinozaki K."/>
        </authorList>
    </citation>
    <scope>NUCLEOTIDE SEQUENCE [LARGE SCALE MRNA]</scope>
    <source>
        <strain>cv. Columbia</strain>
    </source>
</reference>
<reference key="5">
    <citation type="journal article" date="2008" name="BMC Genomics">
        <title>Genome-wide analysis of CCCH zinc finger family in Arabidopsis and rice.</title>
        <authorList>
            <person name="Wang D."/>
            <person name="Guo Y."/>
            <person name="Wu C."/>
            <person name="Yang G."/>
            <person name="Li Y."/>
            <person name="Zheng C."/>
        </authorList>
    </citation>
    <scope>NOMENCLATURE</scope>
</reference>
<organism>
    <name type="scientific">Arabidopsis thaliana</name>
    <name type="common">Mouse-ear cress</name>
    <dbReference type="NCBI Taxonomy" id="3702"/>
    <lineage>
        <taxon>Eukaryota</taxon>
        <taxon>Viridiplantae</taxon>
        <taxon>Streptophyta</taxon>
        <taxon>Embryophyta</taxon>
        <taxon>Tracheophyta</taxon>
        <taxon>Spermatophyta</taxon>
        <taxon>Magnoliopsida</taxon>
        <taxon>eudicotyledons</taxon>
        <taxon>Gunneridae</taxon>
        <taxon>Pentapetalae</taxon>
        <taxon>rosids</taxon>
        <taxon>malvids</taxon>
        <taxon>Brassicales</taxon>
        <taxon>Brassicaceae</taxon>
        <taxon>Camelineae</taxon>
        <taxon>Arabidopsis</taxon>
    </lineage>
</organism>
<feature type="chain" id="PRO_0000213917" description="Zinc finger CCCH domain-containing protein 58">
    <location>
        <begin position="1"/>
        <end position="465"/>
    </location>
</feature>
<feature type="zinc finger region" description="C3H1-type 1" evidence="2">
    <location>
        <begin position="51"/>
        <end position="79"/>
    </location>
</feature>
<feature type="zinc finger region" description="C3H1-type 2" evidence="2">
    <location>
        <begin position="97"/>
        <end position="125"/>
    </location>
</feature>
<feature type="zinc finger region" description="C3H1-type 3" evidence="2">
    <location>
        <begin position="145"/>
        <end position="173"/>
    </location>
</feature>
<feature type="zinc finger region" description="C3H1-type 4" evidence="2">
    <location>
        <begin position="300"/>
        <end position="328"/>
    </location>
</feature>
<feature type="zinc finger region" description="C3H1-type 5" evidence="2">
    <location>
        <begin position="345"/>
        <end position="373"/>
    </location>
</feature>
<feature type="region of interest" description="Disordered" evidence="3">
    <location>
        <begin position="1"/>
        <end position="26"/>
    </location>
</feature>
<feature type="region of interest" description="Disordered" evidence="3">
    <location>
        <begin position="173"/>
        <end position="200"/>
    </location>
</feature>
<feature type="region of interest" description="Disordered" evidence="3">
    <location>
        <begin position="274"/>
        <end position="302"/>
    </location>
</feature>
<feature type="region of interest" description="Disordered" evidence="3">
    <location>
        <begin position="397"/>
        <end position="465"/>
    </location>
</feature>
<feature type="compositionally biased region" description="Low complexity" evidence="3">
    <location>
        <begin position="177"/>
        <end position="191"/>
    </location>
</feature>
<feature type="compositionally biased region" description="Polar residues" evidence="3">
    <location>
        <begin position="283"/>
        <end position="298"/>
    </location>
</feature>
<feature type="compositionally biased region" description="Low complexity" evidence="3">
    <location>
        <begin position="397"/>
        <end position="431"/>
    </location>
</feature>
<feature type="compositionally biased region" description="Basic and acidic residues" evidence="3">
    <location>
        <begin position="444"/>
        <end position="453"/>
    </location>
</feature>
<feature type="compositionally biased region" description="Polar residues" evidence="3">
    <location>
        <begin position="454"/>
        <end position="465"/>
    </location>
</feature>
<proteinExistence type="evidence at transcript level"/>
<comment type="subcellular location">
    <subcellularLocation>
        <location evidence="1">Nucleus</location>
    </subcellularLocation>
</comment>
<gene>
    <name type="ordered locus">At5g18550</name>
    <name type="ORF">T28N17.30</name>
</gene>
<accession>Q6NPN3</accession>
<accession>Q0WLM3</accession>
<evidence type="ECO:0000250" key="1"/>
<evidence type="ECO:0000255" key="2">
    <source>
        <dbReference type="PROSITE-ProRule" id="PRU00723"/>
    </source>
</evidence>
<evidence type="ECO:0000256" key="3">
    <source>
        <dbReference type="SAM" id="MobiDB-lite"/>
    </source>
</evidence>
<sequence>MERYGGAGEDESRSDPSHEWSAQGTETGIEASMWRLGLRGGGGGGETFPERPDEPDCIYYLRTGVCGYGSRCRFNHPRNRAPVLGGLRTEAGEFPERMGQPVCQHFMRTGTCKFGASCKYHHPRQGGGGDSVTPVSLNYMGFPLRPGEKECSYFMRTGQCKFGSTCRYHHPVPPGVQAPSQQQQQQLSAGPTMYPSLQSQTVPSSQQYGVVLARPQLLPGSYVQSPYGYGQMVLPPGMVPYSGWNPYQASVSAMPSPGTQPSMGTSSVYGITPLSPSAPAYQSGPSSTGVSNKEQTFPQRPEQPECQYFMRTGDCKFGTSCRFHHPMEAASPEASTLSHIGLPLRPGAVPCTHFAQHGICKFGPACKFDHSLGSSSLSYSPSPSSLTDMPVAPYPSSLGTLAPSSSSDQCTELISSSSIEPITTTTGGSETVAAGVSSMTSDVSHPEPAETNKGDSASNEAKTSS</sequence>